<organism>
    <name type="scientific">Brucella canis (strain ATCC 23365 / NCTC 10854 / RM-666)</name>
    <dbReference type="NCBI Taxonomy" id="483179"/>
    <lineage>
        <taxon>Bacteria</taxon>
        <taxon>Pseudomonadati</taxon>
        <taxon>Pseudomonadota</taxon>
        <taxon>Alphaproteobacteria</taxon>
        <taxon>Hyphomicrobiales</taxon>
        <taxon>Brucellaceae</taxon>
        <taxon>Brucella/Ochrobactrum group</taxon>
        <taxon>Brucella</taxon>
    </lineage>
</organism>
<comment type="function">
    <text evidence="1">Hydrolyzes ribosome-free peptidyl-tRNAs (with 1 or more amino acids incorporated), which drop off the ribosome during protein synthesis, or as a result of ribosome stalling.</text>
</comment>
<comment type="function">
    <text evidence="1">Catalyzes the release of premature peptidyl moieties from peptidyl-tRNA molecules trapped in stalled 50S ribosomal subunits, and thus maintains levels of free tRNAs and 50S ribosomes.</text>
</comment>
<comment type="catalytic activity">
    <reaction evidence="1">
        <text>an N-acyl-L-alpha-aminoacyl-tRNA + H2O = an N-acyl-L-amino acid + a tRNA + H(+)</text>
        <dbReference type="Rhea" id="RHEA:54448"/>
        <dbReference type="Rhea" id="RHEA-COMP:10123"/>
        <dbReference type="Rhea" id="RHEA-COMP:13883"/>
        <dbReference type="ChEBI" id="CHEBI:15377"/>
        <dbReference type="ChEBI" id="CHEBI:15378"/>
        <dbReference type="ChEBI" id="CHEBI:59874"/>
        <dbReference type="ChEBI" id="CHEBI:78442"/>
        <dbReference type="ChEBI" id="CHEBI:138191"/>
        <dbReference type="EC" id="3.1.1.29"/>
    </reaction>
</comment>
<comment type="subunit">
    <text evidence="1">Monomer.</text>
</comment>
<comment type="subcellular location">
    <subcellularLocation>
        <location evidence="1">Cytoplasm</location>
    </subcellularLocation>
</comment>
<comment type="similarity">
    <text evidence="1">Belongs to the PTH family.</text>
</comment>
<keyword id="KW-0963">Cytoplasm</keyword>
<keyword id="KW-0378">Hydrolase</keyword>
<keyword id="KW-1185">Reference proteome</keyword>
<keyword id="KW-0694">RNA-binding</keyword>
<keyword id="KW-0820">tRNA-binding</keyword>
<accession>A9M6K1</accession>
<proteinExistence type="inferred from homology"/>
<feature type="chain" id="PRO_1000075330" description="Peptidyl-tRNA hydrolase">
    <location>
        <begin position="1"/>
        <end position="250"/>
    </location>
</feature>
<feature type="region of interest" description="Disordered" evidence="2">
    <location>
        <begin position="192"/>
        <end position="250"/>
    </location>
</feature>
<feature type="compositionally biased region" description="Polar residues" evidence="2">
    <location>
        <begin position="219"/>
        <end position="229"/>
    </location>
</feature>
<feature type="compositionally biased region" description="Basic and acidic residues" evidence="2">
    <location>
        <begin position="241"/>
        <end position="250"/>
    </location>
</feature>
<feature type="active site" description="Proton acceptor" evidence="1">
    <location>
        <position position="19"/>
    </location>
</feature>
<feature type="binding site" evidence="1">
    <location>
        <position position="14"/>
    </location>
    <ligand>
        <name>tRNA</name>
        <dbReference type="ChEBI" id="CHEBI:17843"/>
    </ligand>
</feature>
<feature type="binding site" evidence="1">
    <location>
        <position position="64"/>
    </location>
    <ligand>
        <name>tRNA</name>
        <dbReference type="ChEBI" id="CHEBI:17843"/>
    </ligand>
</feature>
<feature type="binding site" evidence="1">
    <location>
        <position position="66"/>
    </location>
    <ligand>
        <name>tRNA</name>
        <dbReference type="ChEBI" id="CHEBI:17843"/>
    </ligand>
</feature>
<feature type="binding site" evidence="1">
    <location>
        <position position="112"/>
    </location>
    <ligand>
        <name>tRNA</name>
        <dbReference type="ChEBI" id="CHEBI:17843"/>
    </ligand>
</feature>
<feature type="site" description="Discriminates between blocked and unblocked aminoacyl-tRNA" evidence="1">
    <location>
        <position position="9"/>
    </location>
</feature>
<feature type="site" description="Stabilizes the basic form of H active site to accept a proton" evidence="1">
    <location>
        <position position="91"/>
    </location>
</feature>
<sequence length="250" mass="27550">MLLIAGLGNPGPQYAHNRHNIGFMAADEIFRRHRFSNWQKKFQAEIADGVIDGEKVLLVKPQTFMNLSGQSIGEAMRFYKLTPADLVVIYDELDLVPGKLRIKTGGGSGGHNGIKSIDAHMQSFPGGQNYRRMRLGIGHPGAKELVHNYVLGDFAKADNEWLDTLMGAVADNVAMLARREDNSFMNRIALAMGDGNQRPGGVKTDPAQLEKAPPKAQSHIRQARQNQKKPNIPESGPMAEMLKKLLGKKD</sequence>
<name>PTH_BRUC2</name>
<evidence type="ECO:0000255" key="1">
    <source>
        <dbReference type="HAMAP-Rule" id="MF_00083"/>
    </source>
</evidence>
<evidence type="ECO:0000256" key="2">
    <source>
        <dbReference type="SAM" id="MobiDB-lite"/>
    </source>
</evidence>
<protein>
    <recommendedName>
        <fullName evidence="1">Peptidyl-tRNA hydrolase</fullName>
        <shortName evidence="1">Pth</shortName>
        <ecNumber evidence="1">3.1.1.29</ecNumber>
    </recommendedName>
</protein>
<gene>
    <name evidence="1" type="primary">pth</name>
    <name type="ordered locus">BCAN_A1573</name>
</gene>
<dbReference type="EC" id="3.1.1.29" evidence="1"/>
<dbReference type="EMBL" id="CP000872">
    <property type="protein sequence ID" value="ABX62597.1"/>
    <property type="molecule type" value="Genomic_DNA"/>
</dbReference>
<dbReference type="RefSeq" id="WP_002967832.1">
    <property type="nucleotide sequence ID" value="NC_010103.1"/>
</dbReference>
<dbReference type="SMR" id="A9M6K1"/>
<dbReference type="GeneID" id="97533278"/>
<dbReference type="KEGG" id="bcs:BCAN_A1573"/>
<dbReference type="HOGENOM" id="CLU_062456_1_1_5"/>
<dbReference type="PhylomeDB" id="A9M6K1"/>
<dbReference type="PRO" id="PR:A9M6K1"/>
<dbReference type="Proteomes" id="UP000001385">
    <property type="component" value="Chromosome I"/>
</dbReference>
<dbReference type="GO" id="GO:0005737">
    <property type="term" value="C:cytoplasm"/>
    <property type="evidence" value="ECO:0007669"/>
    <property type="project" value="UniProtKB-SubCell"/>
</dbReference>
<dbReference type="GO" id="GO:0004045">
    <property type="term" value="F:peptidyl-tRNA hydrolase activity"/>
    <property type="evidence" value="ECO:0007669"/>
    <property type="project" value="UniProtKB-UniRule"/>
</dbReference>
<dbReference type="GO" id="GO:0000049">
    <property type="term" value="F:tRNA binding"/>
    <property type="evidence" value="ECO:0007669"/>
    <property type="project" value="UniProtKB-UniRule"/>
</dbReference>
<dbReference type="GO" id="GO:0006515">
    <property type="term" value="P:protein quality control for misfolded or incompletely synthesized proteins"/>
    <property type="evidence" value="ECO:0007669"/>
    <property type="project" value="UniProtKB-UniRule"/>
</dbReference>
<dbReference type="GO" id="GO:0072344">
    <property type="term" value="P:rescue of stalled ribosome"/>
    <property type="evidence" value="ECO:0007669"/>
    <property type="project" value="UniProtKB-UniRule"/>
</dbReference>
<dbReference type="CDD" id="cd00462">
    <property type="entry name" value="PTH"/>
    <property type="match status" value="1"/>
</dbReference>
<dbReference type="FunFam" id="3.40.50.1470:FF:000001">
    <property type="entry name" value="Peptidyl-tRNA hydrolase"/>
    <property type="match status" value="1"/>
</dbReference>
<dbReference type="Gene3D" id="3.40.50.1470">
    <property type="entry name" value="Peptidyl-tRNA hydrolase"/>
    <property type="match status" value="1"/>
</dbReference>
<dbReference type="HAMAP" id="MF_00083">
    <property type="entry name" value="Pept_tRNA_hydro_bact"/>
    <property type="match status" value="1"/>
</dbReference>
<dbReference type="InterPro" id="IPR001328">
    <property type="entry name" value="Pept_tRNA_hydro"/>
</dbReference>
<dbReference type="InterPro" id="IPR018171">
    <property type="entry name" value="Pept_tRNA_hydro_CS"/>
</dbReference>
<dbReference type="InterPro" id="IPR036416">
    <property type="entry name" value="Pept_tRNA_hydro_sf"/>
</dbReference>
<dbReference type="NCBIfam" id="TIGR00447">
    <property type="entry name" value="pth"/>
    <property type="match status" value="1"/>
</dbReference>
<dbReference type="PANTHER" id="PTHR17224">
    <property type="entry name" value="PEPTIDYL-TRNA HYDROLASE"/>
    <property type="match status" value="1"/>
</dbReference>
<dbReference type="PANTHER" id="PTHR17224:SF1">
    <property type="entry name" value="PEPTIDYL-TRNA HYDROLASE"/>
    <property type="match status" value="1"/>
</dbReference>
<dbReference type="Pfam" id="PF01195">
    <property type="entry name" value="Pept_tRNA_hydro"/>
    <property type="match status" value="1"/>
</dbReference>
<dbReference type="SUPFAM" id="SSF53178">
    <property type="entry name" value="Peptidyl-tRNA hydrolase-like"/>
    <property type="match status" value="1"/>
</dbReference>
<dbReference type="PROSITE" id="PS01195">
    <property type="entry name" value="PEPT_TRNA_HYDROL_1"/>
    <property type="match status" value="1"/>
</dbReference>
<dbReference type="PROSITE" id="PS01196">
    <property type="entry name" value="PEPT_TRNA_HYDROL_2"/>
    <property type="match status" value="1"/>
</dbReference>
<reference key="1">
    <citation type="submission" date="2007-10" db="EMBL/GenBank/DDBJ databases">
        <title>Brucella canis ATCC 23365 whole genome shotgun sequencing project.</title>
        <authorList>
            <person name="Setubal J.C."/>
            <person name="Bowns C."/>
            <person name="Boyle S."/>
            <person name="Crasta O.R."/>
            <person name="Czar M.J."/>
            <person name="Dharmanolla C."/>
            <person name="Gillespie J.J."/>
            <person name="Kenyon R.W."/>
            <person name="Lu J."/>
            <person name="Mane S."/>
            <person name="Mohapatra S."/>
            <person name="Nagrani S."/>
            <person name="Purkayastha A."/>
            <person name="Rajasimha H.K."/>
            <person name="Shallom J.M."/>
            <person name="Shallom S."/>
            <person name="Shukla M."/>
            <person name="Snyder E.E."/>
            <person name="Sobral B.W."/>
            <person name="Wattam A.R."/>
            <person name="Will R."/>
            <person name="Williams K."/>
            <person name="Yoo H."/>
            <person name="Bruce D."/>
            <person name="Detter C."/>
            <person name="Munk C."/>
            <person name="Brettin T.S."/>
        </authorList>
    </citation>
    <scope>NUCLEOTIDE SEQUENCE [LARGE SCALE GENOMIC DNA]</scope>
    <source>
        <strain>ATCC 23365 / NCTC 10854 / RM-666</strain>
    </source>
</reference>